<protein>
    <recommendedName>
        <fullName>Polyadenylate-binding protein, cytoplasmic and nuclear</fullName>
        <shortName>PABP</shortName>
        <shortName>Poly(A)-binding protein</shortName>
    </recommendedName>
    <alternativeName>
        <fullName>Polyadenylate tail-binding protein</fullName>
    </alternativeName>
</protein>
<reference key="1">
    <citation type="journal article" date="2005" name="Nature">
        <title>The genome sequence of the rice blast fungus Magnaporthe grisea.</title>
        <authorList>
            <person name="Dean R.A."/>
            <person name="Talbot N.J."/>
            <person name="Ebbole D.J."/>
            <person name="Farman M.L."/>
            <person name="Mitchell T.K."/>
            <person name="Orbach M.J."/>
            <person name="Thon M.R."/>
            <person name="Kulkarni R."/>
            <person name="Xu J.-R."/>
            <person name="Pan H."/>
            <person name="Read N.D."/>
            <person name="Lee Y.-H."/>
            <person name="Carbone I."/>
            <person name="Brown D."/>
            <person name="Oh Y.Y."/>
            <person name="Donofrio N."/>
            <person name="Jeong J.S."/>
            <person name="Soanes D.M."/>
            <person name="Djonovic S."/>
            <person name="Kolomiets E."/>
            <person name="Rehmeyer C."/>
            <person name="Li W."/>
            <person name="Harding M."/>
            <person name="Kim S."/>
            <person name="Lebrun M.-H."/>
            <person name="Bohnert H."/>
            <person name="Coughlan S."/>
            <person name="Butler J."/>
            <person name="Calvo S.E."/>
            <person name="Ma L.-J."/>
            <person name="Nicol R."/>
            <person name="Purcell S."/>
            <person name="Nusbaum C."/>
            <person name="Galagan J.E."/>
            <person name="Birren B.W."/>
        </authorList>
    </citation>
    <scope>NUCLEOTIDE SEQUENCE [LARGE SCALE GENOMIC DNA]</scope>
    <source>
        <strain>70-15 / ATCC MYA-4617 / FGSC 8958</strain>
    </source>
</reference>
<sequence>MAAPSNTAAVDQLTSDLANANMNGGEKTTVNTNVGASFTGEEIDTAGPTPSSAAPHPQASASLYVGELDPSVTEAMLFELFSQIGSVASIRVCRDAVTRRSLGYAYVNYNTTADGEKALEELNYTLIKGRPCRIMWSQRDPALRKTGQGNVFIKNLDVAIDNKALHDTFAAFGNILSCKVAQDENGNSKGYGFVHYETDEAASQAIKHVNGMLLNEKKVYVGHHIPKKDRQSKFDEMKANFTNIYVKNINPEVTDDEFRTLFEKYGDVTSSSLARDQETGKSRGFGFVNFTSHEDASKAVQELNEKEFHGQNLYVGRAQKKHEREEELRKSYEAARQEKASKYQGVNLYIKNLDDEVDDEKLRQLFSEFGPITSAKVMRDSITEPGEEGESKEGEESEKNKENKPEEKEGDDSKPEEKEGEDSKSKSKLGKSKGFGFVCFANPDDATKAVAEMNQRMVNNKPLYVALAQRKDVRKNQLEQSIQARNQLRMQQAAAAAGMPQQYMQAPVFYGPGSQPGFMPPAGGRGMPYPQGGMPMQPGRPGQFPAGFAAQQGGRGAMPQGIPPMYGLPGQFPPQGPFPQPNNPQFLAAMQQIQQSALAGGRGGPAGRGPMQGGVPVPGMPGGAGLPGFPPNARQQGPGAGRGAAAGRAPAGAPAGARGAGAPEGLQGQLAAVADNPGQQKQILGEAIFPKIQAIHPELAGKITGMLLEMDNTELVALVENDGALRSKVDEALAVYDDYVRQQGDGEGAQAPSKEEKTEEKA</sequence>
<comment type="function">
    <text evidence="1">Binds the poly(A) tail of mRNA. Appears to be an important mediator of the multiple roles of the poly(A) tail in mRNA biogenesis, stability and translation. In the nucleus, involved in both mRNA cleavage and polyadenylation. Is also required for efficient mRNA export to the cytoplasm. Acts in concert with a poly(A)-specific nuclease (PAN) to affect poly(A) tail shortening, which may occur concomitantly with either nucleocytoplasmic mRNA transport or translational initiation. In the cytoplasm, stimulates translation initiation and regulates mRNA decay through translation termination-coupled poly(A) shortening, probably mediated by PAN (By similarity).</text>
</comment>
<comment type="subcellular location">
    <subcellularLocation>
        <location evidence="1">Cytoplasm</location>
    </subcellularLocation>
    <subcellularLocation>
        <location evidence="1">Nucleus</location>
    </subcellularLocation>
</comment>
<comment type="similarity">
    <text evidence="5">Belongs to the polyadenylate-binding protein type-1 family.</text>
</comment>
<accession>A4QUF0</accession>
<accession>G4N1R5</accession>
<name>PABP_PYRO7</name>
<evidence type="ECO:0000250" key="1"/>
<evidence type="ECO:0000255" key="2">
    <source>
        <dbReference type="PROSITE-ProRule" id="PRU00176"/>
    </source>
</evidence>
<evidence type="ECO:0000255" key="3">
    <source>
        <dbReference type="PROSITE-ProRule" id="PRU00641"/>
    </source>
</evidence>
<evidence type="ECO:0000256" key="4">
    <source>
        <dbReference type="SAM" id="MobiDB-lite"/>
    </source>
</evidence>
<evidence type="ECO:0000305" key="5"/>
<keyword id="KW-0963">Cytoplasm</keyword>
<keyword id="KW-0507">mRNA processing</keyword>
<keyword id="KW-0509">mRNA transport</keyword>
<keyword id="KW-0539">Nucleus</keyword>
<keyword id="KW-1185">Reference proteome</keyword>
<keyword id="KW-0677">Repeat</keyword>
<keyword id="KW-0694">RNA-binding</keyword>
<keyword id="KW-0810">Translation regulation</keyword>
<keyword id="KW-0813">Transport</keyword>
<organism>
    <name type="scientific">Pyricularia oryzae (strain 70-15 / ATCC MYA-4617 / FGSC 8958)</name>
    <name type="common">Rice blast fungus</name>
    <name type="synonym">Magnaporthe oryzae</name>
    <dbReference type="NCBI Taxonomy" id="242507"/>
    <lineage>
        <taxon>Eukaryota</taxon>
        <taxon>Fungi</taxon>
        <taxon>Dikarya</taxon>
        <taxon>Ascomycota</taxon>
        <taxon>Pezizomycotina</taxon>
        <taxon>Sordariomycetes</taxon>
        <taxon>Sordariomycetidae</taxon>
        <taxon>Magnaporthales</taxon>
        <taxon>Pyriculariaceae</taxon>
        <taxon>Pyricularia</taxon>
    </lineage>
</organism>
<gene>
    <name type="primary">PAB1</name>
    <name type="ORF">MGG_09505</name>
</gene>
<proteinExistence type="inferred from homology"/>
<feature type="chain" id="PRO_0000295394" description="Polyadenylate-binding protein, cytoplasmic and nuclear">
    <location>
        <begin position="1"/>
        <end position="762"/>
    </location>
</feature>
<feature type="domain" description="RRM 1" evidence="2">
    <location>
        <begin position="61"/>
        <end position="139"/>
    </location>
</feature>
<feature type="domain" description="RRM 2" evidence="2">
    <location>
        <begin position="149"/>
        <end position="226"/>
    </location>
</feature>
<feature type="domain" description="RRM 3" evidence="2">
    <location>
        <begin position="242"/>
        <end position="320"/>
    </location>
</feature>
<feature type="domain" description="RRM 4" evidence="2">
    <location>
        <begin position="346"/>
        <end position="470"/>
    </location>
</feature>
<feature type="domain" description="PABC" evidence="3">
    <location>
        <begin position="664"/>
        <end position="741"/>
    </location>
</feature>
<feature type="region of interest" description="Disordered" evidence="4">
    <location>
        <begin position="39"/>
        <end position="58"/>
    </location>
</feature>
<feature type="region of interest" description="Disordered" evidence="4">
    <location>
        <begin position="376"/>
        <end position="429"/>
    </location>
</feature>
<feature type="region of interest" description="Disordered" evidence="4">
    <location>
        <begin position="596"/>
        <end position="663"/>
    </location>
</feature>
<feature type="region of interest" description="Disordered" evidence="4">
    <location>
        <begin position="740"/>
        <end position="762"/>
    </location>
</feature>
<feature type="compositionally biased region" description="Low complexity" evidence="4">
    <location>
        <begin position="48"/>
        <end position="58"/>
    </location>
</feature>
<feature type="compositionally biased region" description="Basic and acidic residues" evidence="4">
    <location>
        <begin position="389"/>
        <end position="425"/>
    </location>
</feature>
<feature type="compositionally biased region" description="Gly residues" evidence="4">
    <location>
        <begin position="600"/>
        <end position="612"/>
    </location>
</feature>
<feature type="compositionally biased region" description="Low complexity" evidence="4">
    <location>
        <begin position="645"/>
        <end position="663"/>
    </location>
</feature>
<feature type="compositionally biased region" description="Basic and acidic residues" evidence="4">
    <location>
        <begin position="753"/>
        <end position="762"/>
    </location>
</feature>
<dbReference type="EMBL" id="CM001233">
    <property type="protein sequence ID" value="EHA52430.1"/>
    <property type="molecule type" value="Genomic_DNA"/>
</dbReference>
<dbReference type="RefSeq" id="XP_003712237.1">
    <property type="nucleotide sequence ID" value="XM_003712189.1"/>
</dbReference>
<dbReference type="SMR" id="A4QUF0"/>
<dbReference type="FunCoup" id="A4QUF0">
    <property type="interactions" value="1264"/>
</dbReference>
<dbReference type="STRING" id="242507.A4QUF0"/>
<dbReference type="EnsemblFungi" id="MGG_09505T0">
    <property type="protein sequence ID" value="MGG_09505T0"/>
    <property type="gene ID" value="MGG_09505"/>
</dbReference>
<dbReference type="GeneID" id="2680542"/>
<dbReference type="KEGG" id="mgr:MGG_09505"/>
<dbReference type="VEuPathDB" id="FungiDB:MGG_09505"/>
<dbReference type="eggNOG" id="KOG0123">
    <property type="taxonomic scope" value="Eukaryota"/>
</dbReference>
<dbReference type="HOGENOM" id="CLU_012062_22_4_1"/>
<dbReference type="InParanoid" id="A4QUF0"/>
<dbReference type="OMA" id="QQPGFMP"/>
<dbReference type="OrthoDB" id="19742at2759"/>
<dbReference type="Proteomes" id="UP000009058">
    <property type="component" value="Chromosome 3"/>
</dbReference>
<dbReference type="GO" id="GO:0005737">
    <property type="term" value="C:cytoplasm"/>
    <property type="evidence" value="ECO:0007669"/>
    <property type="project" value="UniProtKB-SubCell"/>
</dbReference>
<dbReference type="GO" id="GO:0005634">
    <property type="term" value="C:nucleus"/>
    <property type="evidence" value="ECO:0007669"/>
    <property type="project" value="UniProtKB-SubCell"/>
</dbReference>
<dbReference type="GO" id="GO:0003723">
    <property type="term" value="F:RNA binding"/>
    <property type="evidence" value="ECO:0007669"/>
    <property type="project" value="UniProtKB-KW"/>
</dbReference>
<dbReference type="GO" id="GO:0006397">
    <property type="term" value="P:mRNA processing"/>
    <property type="evidence" value="ECO:0007669"/>
    <property type="project" value="UniProtKB-KW"/>
</dbReference>
<dbReference type="GO" id="GO:0051028">
    <property type="term" value="P:mRNA transport"/>
    <property type="evidence" value="ECO:0007669"/>
    <property type="project" value="UniProtKB-KW"/>
</dbReference>
<dbReference type="GO" id="GO:0006417">
    <property type="term" value="P:regulation of translation"/>
    <property type="evidence" value="ECO:0007669"/>
    <property type="project" value="UniProtKB-KW"/>
</dbReference>
<dbReference type="CDD" id="cd12378">
    <property type="entry name" value="RRM1_I_PABPs"/>
    <property type="match status" value="1"/>
</dbReference>
<dbReference type="CDD" id="cd12379">
    <property type="entry name" value="RRM2_I_PABPs"/>
    <property type="match status" value="1"/>
</dbReference>
<dbReference type="CDD" id="cd12380">
    <property type="entry name" value="RRM3_I_PABPs"/>
    <property type="match status" value="1"/>
</dbReference>
<dbReference type="FunFam" id="3.30.70.330:FF:000003">
    <property type="entry name" value="Polyadenylate-binding protein"/>
    <property type="match status" value="1"/>
</dbReference>
<dbReference type="FunFam" id="3.30.70.330:FF:000355">
    <property type="entry name" value="Polyadenylate-binding protein"/>
    <property type="match status" value="1"/>
</dbReference>
<dbReference type="FunFam" id="3.30.70.330:FF:000384">
    <property type="entry name" value="Polyadenylate-binding protein"/>
    <property type="match status" value="1"/>
</dbReference>
<dbReference type="Gene3D" id="3.30.70.330">
    <property type="match status" value="4"/>
</dbReference>
<dbReference type="Gene3D" id="1.10.1900.10">
    <property type="entry name" value="c-terminal domain of poly(a) binding protein"/>
    <property type="match status" value="1"/>
</dbReference>
<dbReference type="InterPro" id="IPR012677">
    <property type="entry name" value="Nucleotide-bd_a/b_plait_sf"/>
</dbReference>
<dbReference type="InterPro" id="IPR036053">
    <property type="entry name" value="PABP-dom"/>
</dbReference>
<dbReference type="InterPro" id="IPR006515">
    <property type="entry name" value="PABP_1234"/>
</dbReference>
<dbReference type="InterPro" id="IPR002004">
    <property type="entry name" value="PABP_HYD_C"/>
</dbReference>
<dbReference type="InterPro" id="IPR034364">
    <property type="entry name" value="PABP_RRM1"/>
</dbReference>
<dbReference type="InterPro" id="IPR035979">
    <property type="entry name" value="RBD_domain_sf"/>
</dbReference>
<dbReference type="InterPro" id="IPR045305">
    <property type="entry name" value="RRM2_I_PABPs"/>
</dbReference>
<dbReference type="InterPro" id="IPR000504">
    <property type="entry name" value="RRM_dom"/>
</dbReference>
<dbReference type="InterPro" id="IPR003954">
    <property type="entry name" value="RRM_dom_euk"/>
</dbReference>
<dbReference type="NCBIfam" id="TIGR01628">
    <property type="entry name" value="PABP-1234"/>
    <property type="match status" value="1"/>
</dbReference>
<dbReference type="PANTHER" id="PTHR24012">
    <property type="entry name" value="RNA BINDING PROTEIN"/>
    <property type="match status" value="1"/>
</dbReference>
<dbReference type="Pfam" id="PF00658">
    <property type="entry name" value="MLLE"/>
    <property type="match status" value="1"/>
</dbReference>
<dbReference type="Pfam" id="PF00076">
    <property type="entry name" value="RRM_1"/>
    <property type="match status" value="5"/>
</dbReference>
<dbReference type="SMART" id="SM00517">
    <property type="entry name" value="PolyA"/>
    <property type="match status" value="1"/>
</dbReference>
<dbReference type="SMART" id="SM00360">
    <property type="entry name" value="RRM"/>
    <property type="match status" value="4"/>
</dbReference>
<dbReference type="SMART" id="SM00361">
    <property type="entry name" value="RRM_1"/>
    <property type="match status" value="3"/>
</dbReference>
<dbReference type="SUPFAM" id="SSF63570">
    <property type="entry name" value="PABC (PABP) domain"/>
    <property type="match status" value="1"/>
</dbReference>
<dbReference type="SUPFAM" id="SSF54928">
    <property type="entry name" value="RNA-binding domain, RBD"/>
    <property type="match status" value="3"/>
</dbReference>
<dbReference type="PROSITE" id="PS51309">
    <property type="entry name" value="PABC"/>
    <property type="match status" value="1"/>
</dbReference>
<dbReference type="PROSITE" id="PS50102">
    <property type="entry name" value="RRM"/>
    <property type="match status" value="4"/>
</dbReference>